<dbReference type="EMBL" id="BC035500">
    <property type="protein sequence ID" value="AAH35500.1"/>
    <property type="molecule type" value="mRNA"/>
</dbReference>
<dbReference type="EMBL" id="BC052967">
    <property type="protein sequence ID" value="AAH52967.1"/>
    <property type="molecule type" value="mRNA"/>
</dbReference>
<dbReference type="EMBL" id="BC053666">
    <property type="protein sequence ID" value="AAH53666.1"/>
    <property type="molecule type" value="mRNA"/>
</dbReference>
<dbReference type="CCDS" id="CCDS61124.1">
    <molecule id="Q7Z6J2-2"/>
</dbReference>
<dbReference type="CCDS" id="CCDS8817.1">
    <molecule id="Q7Z6J2-1"/>
</dbReference>
<dbReference type="RefSeq" id="NP_001258785.1">
    <molecule id="Q7Z6J2-2"/>
    <property type="nucleotide sequence ID" value="NM_001271856.2"/>
</dbReference>
<dbReference type="RefSeq" id="NP_859062.1">
    <molecule id="Q7Z6J2-1"/>
    <property type="nucleotide sequence ID" value="NM_181711.4"/>
</dbReference>
<dbReference type="PDB" id="2PNT">
    <property type="method" value="X-ray"/>
    <property type="resolution" value="2.15 A"/>
    <property type="chains" value="A/B=97-188"/>
</dbReference>
<dbReference type="PDBsum" id="2PNT"/>
<dbReference type="SMR" id="Q7Z6J2"/>
<dbReference type="BioGRID" id="127762">
    <property type="interactions" value="12"/>
</dbReference>
<dbReference type="CORUM" id="Q7Z6J2"/>
<dbReference type="FunCoup" id="Q7Z6J2">
    <property type="interactions" value="824"/>
</dbReference>
<dbReference type="IntAct" id="Q7Z6J2">
    <property type="interactions" value="2"/>
</dbReference>
<dbReference type="STRING" id="9606.ENSP00000293662"/>
<dbReference type="GlyGen" id="Q7Z6J2">
    <property type="glycosylation" value="2 sites"/>
</dbReference>
<dbReference type="iPTMnet" id="Q7Z6J2"/>
<dbReference type="PhosphoSitePlus" id="Q7Z6J2"/>
<dbReference type="BioMuta" id="GRASP"/>
<dbReference type="DMDM" id="74738818"/>
<dbReference type="jPOST" id="Q7Z6J2"/>
<dbReference type="MassIVE" id="Q7Z6J2"/>
<dbReference type="PaxDb" id="9606-ENSP00000293662"/>
<dbReference type="PeptideAtlas" id="Q7Z6J2"/>
<dbReference type="ProteomicsDB" id="69419">
    <molecule id="Q7Z6J2-1"/>
</dbReference>
<dbReference type="ProteomicsDB" id="69420">
    <molecule id="Q7Z6J2-2"/>
</dbReference>
<dbReference type="Antibodypedia" id="26519">
    <property type="antibodies" value="92 antibodies from 24 providers"/>
</dbReference>
<dbReference type="DNASU" id="160622"/>
<dbReference type="Ensembl" id="ENST00000293662.9">
    <molecule id="Q7Z6J2-1"/>
    <property type="protein sequence ID" value="ENSP00000293662.4"/>
    <property type="gene ID" value="ENSG00000161835.11"/>
</dbReference>
<dbReference type="Ensembl" id="ENST00000552049.5">
    <molecule id="Q7Z6J2-2"/>
    <property type="protein sequence ID" value="ENSP00000449492.1"/>
    <property type="gene ID" value="ENSG00000161835.11"/>
</dbReference>
<dbReference type="GeneID" id="160622"/>
<dbReference type="KEGG" id="hsa:160622"/>
<dbReference type="MANE-Select" id="ENST00000293662.9">
    <property type="protein sequence ID" value="ENSP00000293662.4"/>
    <property type="RefSeq nucleotide sequence ID" value="NM_181711.4"/>
    <property type="RefSeq protein sequence ID" value="NP_859062.1"/>
</dbReference>
<dbReference type="UCSC" id="uc001rzo.3">
    <molecule id="Q7Z6J2-1"/>
    <property type="organism name" value="human"/>
</dbReference>
<dbReference type="AGR" id="HGNC:18707"/>
<dbReference type="CTD" id="160622"/>
<dbReference type="DisGeNET" id="160622"/>
<dbReference type="GeneCards" id="TAMALIN"/>
<dbReference type="HGNC" id="HGNC:18707">
    <property type="gene designation" value="TAMALIN"/>
</dbReference>
<dbReference type="HPA" id="ENSG00000161835">
    <property type="expression patterns" value="Low tissue specificity"/>
</dbReference>
<dbReference type="MIM" id="612027">
    <property type="type" value="gene"/>
</dbReference>
<dbReference type="neXtProt" id="NX_Q7Z6J2"/>
<dbReference type="OpenTargets" id="ENSG00000161835"/>
<dbReference type="VEuPathDB" id="HostDB:ENSG00000161835"/>
<dbReference type="eggNOG" id="KOG3528">
    <property type="taxonomic scope" value="Eukaryota"/>
</dbReference>
<dbReference type="GeneTree" id="ENSGT00530000063734"/>
<dbReference type="HOGENOM" id="CLU_058640_0_0_1"/>
<dbReference type="InParanoid" id="Q7Z6J2"/>
<dbReference type="OMA" id="YQTCIYQ"/>
<dbReference type="OrthoDB" id="10041077at2759"/>
<dbReference type="PAN-GO" id="Q7Z6J2">
    <property type="GO annotations" value="2 GO annotations based on evolutionary models"/>
</dbReference>
<dbReference type="PhylomeDB" id="Q7Z6J2"/>
<dbReference type="TreeFam" id="TF316315"/>
<dbReference type="PathwayCommons" id="Q7Z6J2"/>
<dbReference type="SignaLink" id="Q7Z6J2"/>
<dbReference type="BioGRID-ORCS" id="160622">
    <property type="hits" value="54 hits in 1145 CRISPR screens"/>
</dbReference>
<dbReference type="ChiTaRS" id="GRASP">
    <property type="organism name" value="human"/>
</dbReference>
<dbReference type="EvolutionaryTrace" id="Q7Z6J2"/>
<dbReference type="GenomeRNAi" id="160622"/>
<dbReference type="Pharos" id="Q7Z6J2">
    <property type="development level" value="Tbio"/>
</dbReference>
<dbReference type="PRO" id="PR:Q7Z6J2"/>
<dbReference type="Proteomes" id="UP000005640">
    <property type="component" value="Chromosome 12"/>
</dbReference>
<dbReference type="RNAct" id="Q7Z6J2">
    <property type="molecule type" value="protein"/>
</dbReference>
<dbReference type="Bgee" id="ENSG00000161835">
    <property type="expression patterns" value="Expressed in right lung and 167 other cell types or tissues"/>
</dbReference>
<dbReference type="ExpressionAtlas" id="Q7Z6J2">
    <property type="expression patterns" value="baseline and differential"/>
</dbReference>
<dbReference type="GO" id="GO:0098978">
    <property type="term" value="C:glutamatergic synapse"/>
    <property type="evidence" value="ECO:0007669"/>
    <property type="project" value="Ensembl"/>
</dbReference>
<dbReference type="GO" id="GO:0048471">
    <property type="term" value="C:perinuclear region of cytoplasm"/>
    <property type="evidence" value="ECO:0007669"/>
    <property type="project" value="UniProtKB-SubCell"/>
</dbReference>
<dbReference type="GO" id="GO:0005886">
    <property type="term" value="C:plasma membrane"/>
    <property type="evidence" value="ECO:0000318"/>
    <property type="project" value="GO_Central"/>
</dbReference>
<dbReference type="GO" id="GO:0014069">
    <property type="term" value="C:postsynaptic density"/>
    <property type="evidence" value="ECO:0007669"/>
    <property type="project" value="Ensembl"/>
</dbReference>
<dbReference type="GO" id="GO:0045211">
    <property type="term" value="C:postsynaptic membrane"/>
    <property type="evidence" value="ECO:0007669"/>
    <property type="project" value="UniProtKB-SubCell"/>
</dbReference>
<dbReference type="GO" id="GO:0042802">
    <property type="term" value="F:identical protein binding"/>
    <property type="evidence" value="ECO:0007669"/>
    <property type="project" value="Ensembl"/>
</dbReference>
<dbReference type="GO" id="GO:0030165">
    <property type="term" value="F:PDZ domain binding"/>
    <property type="evidence" value="ECO:0007669"/>
    <property type="project" value="Ensembl"/>
</dbReference>
<dbReference type="GO" id="GO:0031267">
    <property type="term" value="F:small GTPase binding"/>
    <property type="evidence" value="ECO:0007669"/>
    <property type="project" value="Ensembl"/>
</dbReference>
<dbReference type="GO" id="GO:0099149">
    <property type="term" value="P:regulation of postsynaptic neurotransmitter receptor internalization"/>
    <property type="evidence" value="ECO:0007669"/>
    <property type="project" value="Ensembl"/>
</dbReference>
<dbReference type="GO" id="GO:0007165">
    <property type="term" value="P:signal transduction"/>
    <property type="evidence" value="ECO:0000318"/>
    <property type="project" value="GO_Central"/>
</dbReference>
<dbReference type="CDD" id="cd06713">
    <property type="entry name" value="PDZ_tamalin_CYTIP-like"/>
    <property type="match status" value="1"/>
</dbReference>
<dbReference type="FunFam" id="2.30.42.10:FF:000157">
    <property type="entry name" value="General receptor for phosphoinositides 1-associated scaffold protein"/>
    <property type="match status" value="1"/>
</dbReference>
<dbReference type="Gene3D" id="2.30.42.10">
    <property type="match status" value="1"/>
</dbReference>
<dbReference type="InterPro" id="IPR052122">
    <property type="entry name" value="Intracell_Traff_Signaling_Reg"/>
</dbReference>
<dbReference type="InterPro" id="IPR001478">
    <property type="entry name" value="PDZ"/>
</dbReference>
<dbReference type="InterPro" id="IPR036034">
    <property type="entry name" value="PDZ_sf"/>
</dbReference>
<dbReference type="PANTHER" id="PTHR15963">
    <property type="entry name" value="GENERAL RECEPTOR FOR PHOSPHOINOSITIDES 1-ASSOCIATED SCAFFOLD PROTEIN-RELATED"/>
    <property type="match status" value="1"/>
</dbReference>
<dbReference type="PANTHER" id="PTHR15963:SF3">
    <property type="entry name" value="PROTEIN TAMALIN"/>
    <property type="match status" value="1"/>
</dbReference>
<dbReference type="Pfam" id="PF00595">
    <property type="entry name" value="PDZ"/>
    <property type="match status" value="1"/>
</dbReference>
<dbReference type="SMART" id="SM00228">
    <property type="entry name" value="PDZ"/>
    <property type="match status" value="1"/>
</dbReference>
<dbReference type="SUPFAM" id="SSF50156">
    <property type="entry name" value="PDZ domain-like"/>
    <property type="match status" value="1"/>
</dbReference>
<dbReference type="PROSITE" id="PS50106">
    <property type="entry name" value="PDZ"/>
    <property type="match status" value="1"/>
</dbReference>
<name>GRASP_HUMAN</name>
<evidence type="ECO:0000250" key="1"/>
<evidence type="ECO:0000250" key="2">
    <source>
        <dbReference type="UniProtKB" id="Q8R4T5"/>
    </source>
</evidence>
<evidence type="ECO:0000250" key="3">
    <source>
        <dbReference type="UniProtKB" id="Q9JJA9"/>
    </source>
</evidence>
<evidence type="ECO:0000255" key="4">
    <source>
        <dbReference type="PROSITE-ProRule" id="PRU00143"/>
    </source>
</evidence>
<evidence type="ECO:0000256" key="5">
    <source>
        <dbReference type="SAM" id="MobiDB-lite"/>
    </source>
</evidence>
<evidence type="ECO:0000303" key="6">
    <source>
    </source>
</evidence>
<evidence type="ECO:0000305" key="7"/>
<evidence type="ECO:0000312" key="8">
    <source>
        <dbReference type="HGNC" id="HGNC:18707"/>
    </source>
</evidence>
<evidence type="ECO:0007744" key="9">
    <source>
    </source>
</evidence>
<evidence type="ECO:0007829" key="10">
    <source>
        <dbReference type="PDB" id="2PNT"/>
    </source>
</evidence>
<comment type="function">
    <text evidence="1">Plays a role in intracellular trafficking and contributes to the macromolecular organization of group 1 metabotropic glutamate receptors (mGluRs) at synapses.</text>
</comment>
<comment type="subunit">
    <text evidence="1">Heteromer. Composed of TAMALIN, CYTH2 and at least one GRM1. Also interacts with CYTH3, GRM2, GRM3 and GRM5 (By similarity).</text>
</comment>
<comment type="subcellular location">
    <subcellularLocation>
        <location evidence="2">Cytoplasm</location>
        <location evidence="2">Perinuclear region</location>
    </subcellularLocation>
    <subcellularLocation>
        <location evidence="2">Cell membrane</location>
        <topology evidence="2">Peripheral membrane protein</topology>
        <orientation evidence="2">Cytoplasmic side</orientation>
    </subcellularLocation>
    <subcellularLocation>
        <location evidence="2">Postsynaptic cell membrane</location>
    </subcellularLocation>
</comment>
<comment type="alternative products">
    <event type="alternative splicing"/>
    <isoform>
        <id>Q7Z6J2-1</id>
        <name>1</name>
        <sequence type="displayed"/>
    </isoform>
    <isoform>
        <id>Q7Z6J2-2</id>
        <name>2</name>
        <sequence type="described" ref="VSP_015707 VSP_015708"/>
    </isoform>
</comment>
<protein>
    <recommendedName>
        <fullName evidence="7">Protein TAMALIN</fullName>
    </recommendedName>
    <alternativeName>
        <fullName evidence="7">General receptor for phosphoinositides 1-associated scaffold protein</fullName>
        <shortName>GRP1-associated scaffold protein</shortName>
    </alternativeName>
</protein>
<accession>Q7Z6J2</accession>
<accession>Q6PIF8</accession>
<accession>Q7Z741</accession>
<gene>
    <name evidence="8" type="primary">TAMALIN</name>
    <name type="synonym">GRASP</name>
</gene>
<reference key="1">
    <citation type="journal article" date="2004" name="Genome Res.">
        <title>The status, quality, and expansion of the NIH full-length cDNA project: the Mammalian Gene Collection (MGC).</title>
        <authorList>
            <consortium name="The MGC Project Team"/>
        </authorList>
    </citation>
    <scope>NUCLEOTIDE SEQUENCE [LARGE SCALE MRNA] (ISOFORMS 1 AND 2)</scope>
    <source>
        <tissue>Ovary</tissue>
        <tissue>Skin</tissue>
    </source>
</reference>
<reference key="2">
    <citation type="journal article" date="2009" name="Sci. Signal.">
        <title>Quantitative phosphoproteomic analysis of T cell receptor signaling reveals system-wide modulation of protein-protein interactions.</title>
        <authorList>
            <person name="Mayya V."/>
            <person name="Lundgren D.H."/>
            <person name="Hwang S.-I."/>
            <person name="Rezaul K."/>
            <person name="Wu L."/>
            <person name="Eng J.K."/>
            <person name="Rodionov V."/>
            <person name="Han D.K."/>
        </authorList>
    </citation>
    <scope>PHOSPHORYLATION [LARGE SCALE ANALYSIS] AT TYR-237</scope>
    <scope>IDENTIFICATION BY MASS SPECTROMETRY [LARGE SCALE ANALYSIS]</scope>
    <source>
        <tissue>Leukemic T-cell</tissue>
    </source>
</reference>
<feature type="chain" id="PRO_0000087584" description="Protein TAMALIN">
    <location>
        <begin position="1"/>
        <end position="395"/>
    </location>
</feature>
<feature type="domain" description="PDZ" evidence="4">
    <location>
        <begin position="101"/>
        <end position="190"/>
    </location>
</feature>
<feature type="region of interest" description="Disordered" evidence="5">
    <location>
        <begin position="1"/>
        <end position="52"/>
    </location>
</feature>
<feature type="region of interest" description="Interaction with PSCD3" evidence="1">
    <location>
        <begin position="181"/>
        <end position="258"/>
    </location>
</feature>
<feature type="region of interest" description="Disordered" evidence="5">
    <location>
        <begin position="293"/>
        <end position="349"/>
    </location>
</feature>
<feature type="compositionally biased region" description="Low complexity" evidence="5">
    <location>
        <begin position="16"/>
        <end position="33"/>
    </location>
</feature>
<feature type="compositionally biased region" description="Pro residues" evidence="5">
    <location>
        <begin position="296"/>
        <end position="305"/>
    </location>
</feature>
<feature type="compositionally biased region" description="Gly residues" evidence="5">
    <location>
        <begin position="338"/>
        <end position="348"/>
    </location>
</feature>
<feature type="modified residue" description="Phosphothreonine" evidence="3">
    <location>
        <position position="77"/>
    </location>
</feature>
<feature type="modified residue" description="Phosphoserine" evidence="2">
    <location>
        <position position="94"/>
    </location>
</feature>
<feature type="modified residue" description="Phosphotyrosine" evidence="9">
    <location>
        <position position="237"/>
    </location>
</feature>
<feature type="modified residue" description="Omega-N-methylarginine" evidence="3">
    <location>
        <position position="270"/>
    </location>
</feature>
<feature type="modified residue" description="Phosphoserine" evidence="3">
    <location>
        <position position="387"/>
    </location>
</feature>
<feature type="splice variant" id="VSP_015707" description="In isoform 2." evidence="6">
    <location>
        <begin position="1"/>
        <end position="143"/>
    </location>
</feature>
<feature type="splice variant" id="VSP_015708" description="In isoform 2." evidence="6">
    <original>AQLAGLTP</original>
    <variation>MTLLPSKG</variation>
    <location>
        <begin position="144"/>
        <end position="151"/>
    </location>
</feature>
<feature type="strand" evidence="10">
    <location>
        <begin position="98"/>
        <end position="105"/>
    </location>
</feature>
<feature type="strand" evidence="10">
    <location>
        <begin position="114"/>
        <end position="121"/>
    </location>
</feature>
<feature type="strand" evidence="10">
    <location>
        <begin position="130"/>
        <end position="138"/>
    </location>
</feature>
<feature type="helix" evidence="10">
    <location>
        <begin position="143"/>
        <end position="146"/>
    </location>
</feature>
<feature type="strand" evidence="10">
    <location>
        <begin position="154"/>
        <end position="158"/>
    </location>
</feature>
<feature type="helix" evidence="10">
    <location>
        <begin position="168"/>
        <end position="177"/>
    </location>
</feature>
<feature type="turn" evidence="10">
    <location>
        <begin position="178"/>
        <end position="180"/>
    </location>
</feature>
<feature type="strand" evidence="10">
    <location>
        <begin position="181"/>
        <end position="188"/>
    </location>
</feature>
<proteinExistence type="evidence at protein level"/>
<organism>
    <name type="scientific">Homo sapiens</name>
    <name type="common">Human</name>
    <dbReference type="NCBI Taxonomy" id="9606"/>
    <lineage>
        <taxon>Eukaryota</taxon>
        <taxon>Metazoa</taxon>
        <taxon>Chordata</taxon>
        <taxon>Craniata</taxon>
        <taxon>Vertebrata</taxon>
        <taxon>Euteleostomi</taxon>
        <taxon>Mammalia</taxon>
        <taxon>Eutheria</taxon>
        <taxon>Euarchontoglires</taxon>
        <taxon>Primates</taxon>
        <taxon>Haplorrhini</taxon>
        <taxon>Catarrhini</taxon>
        <taxon>Hominidae</taxon>
        <taxon>Homo</taxon>
    </lineage>
</organism>
<keyword id="KW-0002">3D-structure</keyword>
<keyword id="KW-0025">Alternative splicing</keyword>
<keyword id="KW-1003">Cell membrane</keyword>
<keyword id="KW-0963">Cytoplasm</keyword>
<keyword id="KW-0472">Membrane</keyword>
<keyword id="KW-0488">Methylation</keyword>
<keyword id="KW-0597">Phosphoprotein</keyword>
<keyword id="KW-0628">Postsynaptic cell membrane</keyword>
<keyword id="KW-1267">Proteomics identification</keyword>
<keyword id="KW-1185">Reference proteome</keyword>
<keyword id="KW-0770">Synapse</keyword>
<sequence length="395" mass="42623">MTLRRLRKLQQKEEAAATPDPAARTPDSEVAPAAPVPTPGPPAAAATPGPPADELYAALEDYHPAELYRALAVSGGTLPRRKGSGFRWKNLSQSPEQQRKVLTLEKEDNQTFGFEIQTYGLHHREEQRVEMVTFVCRVHESSPAQLAGLTPGDTIASVNGLNVEGIRHREIVDIIKASGNVLRLETLYGTSIRKAELEARLQYLKQTLYEKWGEYRSLMVQEQRLVHGLVVKDPSIYDTLESVRSCLYGAGLLPGSLPFGPLLAVPGRPRGGARRARGDADDAVYHTCFFGDSEPPALPPPPPPARAFGPGPAETPAVGPGPGPRAALSRSASVRCAGPGGGGGGGAPGALWTEAREQALCGPGLRKTKYRSFRRRLLKFIPGLNRSLEEEESQL</sequence>